<name>CYC_MACMU</name>
<evidence type="ECO:0000250" key="1"/>
<evidence type="ECO:0000250" key="2">
    <source>
        <dbReference type="UniProtKB" id="P62894"/>
    </source>
</evidence>
<evidence type="ECO:0000250" key="3">
    <source>
        <dbReference type="UniProtKB" id="P62897"/>
    </source>
</evidence>
<evidence type="ECO:0000269" key="4">
    <source>
    </source>
</evidence>
<evidence type="ECO:0000305" key="5"/>
<feature type="initiator methionine" description="Removed" evidence="4">
    <location>
        <position position="1"/>
    </location>
</feature>
<feature type="chain" id="PRO_0000108221" description="Cytochrome c">
    <location>
        <begin position="2"/>
        <end position="105"/>
    </location>
</feature>
<feature type="binding site" description="covalent">
    <location>
        <position position="15"/>
    </location>
    <ligand>
        <name>heme c</name>
        <dbReference type="ChEBI" id="CHEBI:61717"/>
    </ligand>
</feature>
<feature type="binding site" description="covalent">
    <location>
        <position position="18"/>
    </location>
    <ligand>
        <name>heme c</name>
        <dbReference type="ChEBI" id="CHEBI:61717"/>
    </ligand>
</feature>
<feature type="binding site" description="axial binding residue">
    <location>
        <position position="19"/>
    </location>
    <ligand>
        <name>heme c</name>
        <dbReference type="ChEBI" id="CHEBI:61717"/>
    </ligand>
    <ligandPart>
        <name>Fe</name>
        <dbReference type="ChEBI" id="CHEBI:18248"/>
    </ligandPart>
</feature>
<feature type="binding site" description="axial binding residue">
    <location>
        <position position="81"/>
    </location>
    <ligand>
        <name>heme c</name>
        <dbReference type="ChEBI" id="CHEBI:61717"/>
    </ligand>
    <ligandPart>
        <name>Fe</name>
        <dbReference type="ChEBI" id="CHEBI:18248"/>
    </ligandPart>
</feature>
<feature type="modified residue" description="N-acetylglycine" evidence="4">
    <location>
        <position position="2"/>
    </location>
</feature>
<feature type="modified residue" description="Phosphotyrosine" evidence="2">
    <location>
        <position position="49"/>
    </location>
</feature>
<feature type="modified residue" description="N6-succinyllysine" evidence="3">
    <location>
        <position position="56"/>
    </location>
</feature>
<feature type="modified residue" description="N6-acetyllysine; alternate" evidence="3">
    <location>
        <position position="73"/>
    </location>
</feature>
<feature type="modified residue" description="N6-succinyllysine; alternate" evidence="3">
    <location>
        <position position="73"/>
    </location>
</feature>
<feature type="modified residue" description="Phosphotyrosine" evidence="2">
    <location>
        <position position="98"/>
    </location>
</feature>
<feature type="modified residue" description="N6-acetyllysine" evidence="3">
    <location>
        <position position="100"/>
    </location>
</feature>
<proteinExistence type="evidence at protein level"/>
<dbReference type="PIR" id="A00003">
    <property type="entry name" value="CCMQR"/>
</dbReference>
<dbReference type="RefSeq" id="XP_014992345.1">
    <property type="nucleotide sequence ID" value="XM_015136859.1"/>
</dbReference>
<dbReference type="RefSeq" id="XP_028701781.1">
    <property type="nucleotide sequence ID" value="XM_028845948.1"/>
</dbReference>
<dbReference type="RefSeq" id="XP_028701782.1">
    <property type="nucleotide sequence ID" value="XM_028845949.1"/>
</dbReference>
<dbReference type="BMRB" id="P00002"/>
<dbReference type="SMR" id="P00002"/>
<dbReference type="FunCoup" id="P00002">
    <property type="interactions" value="2331"/>
</dbReference>
<dbReference type="STRING" id="9544.ENSMMUP00000073390"/>
<dbReference type="iPTMnet" id="P00002"/>
<dbReference type="PaxDb" id="9544-ENSMMUP00000035167"/>
<dbReference type="Ensembl" id="ENSMMUT00000081058.1">
    <property type="protein sequence ID" value="ENSMMUP00000073390.1"/>
    <property type="gene ID" value="ENSMMUG00000051205.1"/>
</dbReference>
<dbReference type="GeneID" id="100425223"/>
<dbReference type="VEuPathDB" id="HostDB:ENSMMUG00000051205"/>
<dbReference type="eggNOG" id="KOG3453">
    <property type="taxonomic scope" value="Eukaryota"/>
</dbReference>
<dbReference type="GeneTree" id="ENSGT00390000009405"/>
<dbReference type="HOGENOM" id="CLU_060944_3_0_1"/>
<dbReference type="InParanoid" id="P00002"/>
<dbReference type="OMA" id="DKGIIWD"/>
<dbReference type="OrthoDB" id="9508248at2759"/>
<dbReference type="TreeFam" id="TF300226"/>
<dbReference type="Proteomes" id="UP000006718">
    <property type="component" value="Chromosome 3"/>
</dbReference>
<dbReference type="Bgee" id="ENSMMUG00000051205">
    <property type="expression patterns" value="Expressed in colon and 21 other cell types or tissues"/>
</dbReference>
<dbReference type="ExpressionAtlas" id="P00002">
    <property type="expression patterns" value="baseline"/>
</dbReference>
<dbReference type="GO" id="GO:0005829">
    <property type="term" value="C:cytosol"/>
    <property type="evidence" value="ECO:0000250"/>
    <property type="project" value="UniProtKB"/>
</dbReference>
<dbReference type="GO" id="GO:0005758">
    <property type="term" value="C:mitochondrial intermembrane space"/>
    <property type="evidence" value="ECO:0000318"/>
    <property type="project" value="GO_Central"/>
</dbReference>
<dbReference type="GO" id="GO:0009055">
    <property type="term" value="F:electron transfer activity"/>
    <property type="evidence" value="ECO:0000318"/>
    <property type="project" value="GO_Central"/>
</dbReference>
<dbReference type="GO" id="GO:0020037">
    <property type="term" value="F:heme binding"/>
    <property type="evidence" value="ECO:0007669"/>
    <property type="project" value="InterPro"/>
</dbReference>
<dbReference type="GO" id="GO:0046872">
    <property type="term" value="F:metal ion binding"/>
    <property type="evidence" value="ECO:0007669"/>
    <property type="project" value="UniProtKB-KW"/>
</dbReference>
<dbReference type="GO" id="GO:0006915">
    <property type="term" value="P:apoptotic process"/>
    <property type="evidence" value="ECO:0007669"/>
    <property type="project" value="UniProtKB-KW"/>
</dbReference>
<dbReference type="GO" id="GO:0006123">
    <property type="term" value="P:mitochondrial electron transport, cytochrome c to oxygen"/>
    <property type="evidence" value="ECO:0000318"/>
    <property type="project" value="GO_Central"/>
</dbReference>
<dbReference type="GO" id="GO:0006122">
    <property type="term" value="P:mitochondrial electron transport, ubiquinol to cytochrome c"/>
    <property type="evidence" value="ECO:0000318"/>
    <property type="project" value="GO_Central"/>
</dbReference>
<dbReference type="FunFam" id="1.10.760.10:FF:000008">
    <property type="entry name" value="Cytochrome c"/>
    <property type="match status" value="1"/>
</dbReference>
<dbReference type="Gene3D" id="1.10.760.10">
    <property type="entry name" value="Cytochrome c-like domain"/>
    <property type="match status" value="1"/>
</dbReference>
<dbReference type="InterPro" id="IPR009056">
    <property type="entry name" value="Cyt_c-like_dom"/>
</dbReference>
<dbReference type="InterPro" id="IPR036909">
    <property type="entry name" value="Cyt_c-like_dom_sf"/>
</dbReference>
<dbReference type="InterPro" id="IPR002327">
    <property type="entry name" value="Cyt_c_1A/1B"/>
</dbReference>
<dbReference type="PANTHER" id="PTHR11961">
    <property type="entry name" value="CYTOCHROME C"/>
    <property type="match status" value="1"/>
</dbReference>
<dbReference type="Pfam" id="PF00034">
    <property type="entry name" value="Cytochrom_C"/>
    <property type="match status" value="1"/>
</dbReference>
<dbReference type="PRINTS" id="PR00604">
    <property type="entry name" value="CYTCHRMECIAB"/>
</dbReference>
<dbReference type="SUPFAM" id="SSF46626">
    <property type="entry name" value="Cytochrome c"/>
    <property type="match status" value="1"/>
</dbReference>
<dbReference type="PROSITE" id="PS51007">
    <property type="entry name" value="CYTC"/>
    <property type="match status" value="1"/>
</dbReference>
<comment type="function">
    <text>Electron carrier protein. The oxidized form of the cytochrome c heme group can accept an electron from the heme group of the cytochrome c1 subunit of cytochrome reductase. Cytochrome c then transfers this electron to the cytochrome oxidase complex, the final protein carrier in the mitochondrial electron-transport chain.</text>
</comment>
<comment type="function">
    <text evidence="1">Plays a role in apoptosis. Suppression of the anti-apoptotic members or activation of the pro-apoptotic members of the Bcl-2 family leads to altered mitochondrial membrane permeability resulting in release of cytochrome c into the cytosol. Binding of cytochrome c to Apaf-1 triggers the activation of caspase-9, which then accelerates apoptosis by activating other caspases (By similarity).</text>
</comment>
<comment type="subcellular location">
    <subcellularLocation>
        <location>Mitochondrion intermembrane space</location>
    </subcellularLocation>
    <text>Loosely associated with the inner membrane.</text>
</comment>
<comment type="PTM">
    <text>Binds 1 heme c group covalently per subunit.</text>
</comment>
<comment type="PTM">
    <text evidence="1">Phosphorylation at Tyr-49 and Tyr-98 both reduce by half the turnover in the reaction with cytochrome c oxidase, down-regulating mitochondrial respiration.</text>
</comment>
<comment type="similarity">
    <text evidence="5">Belongs to the cytochrome c family.</text>
</comment>
<comment type="online information" name="Protein Spotlight">
    <link uri="https://www.proteinspotlight.org/back_issues/076"/>
    <text>Life shuttle - Issue 76 of November 2006</text>
</comment>
<gene>
    <name type="primary">CYCS</name>
    <name type="synonym">CYC</name>
</gene>
<accession>P00002</accession>
<reference key="1">
    <citation type="journal article" date="1965" name="J. Biol. Chem.">
        <title>Amino acid sequence of rhesus monkey heart cytochrome c.</title>
        <authorList>
            <person name="Rothfus J.A."/>
            <person name="Smith E.L."/>
        </authorList>
    </citation>
    <scope>PRELIMINARY PROTEIN SEQUENCE OF 2-105</scope>
    <scope>ACETYLATION AT GLY-2</scope>
    <scope>PROTEIN SEQUENCE OF 56-62 AND 69-71</scope>
</reference>
<organism>
    <name type="scientific">Macaca mulatta</name>
    <name type="common">Rhesus macaque</name>
    <dbReference type="NCBI Taxonomy" id="9544"/>
    <lineage>
        <taxon>Eukaryota</taxon>
        <taxon>Metazoa</taxon>
        <taxon>Chordata</taxon>
        <taxon>Craniata</taxon>
        <taxon>Vertebrata</taxon>
        <taxon>Euteleostomi</taxon>
        <taxon>Mammalia</taxon>
        <taxon>Eutheria</taxon>
        <taxon>Euarchontoglires</taxon>
        <taxon>Primates</taxon>
        <taxon>Haplorrhini</taxon>
        <taxon>Catarrhini</taxon>
        <taxon>Cercopithecidae</taxon>
        <taxon>Cercopithecinae</taxon>
        <taxon>Macaca</taxon>
    </lineage>
</organism>
<protein>
    <recommendedName>
        <fullName>Cytochrome c</fullName>
    </recommendedName>
</protein>
<keyword id="KW-0007">Acetylation</keyword>
<keyword id="KW-0053">Apoptosis</keyword>
<keyword id="KW-0903">Direct protein sequencing</keyword>
<keyword id="KW-0249">Electron transport</keyword>
<keyword id="KW-0349">Heme</keyword>
<keyword id="KW-0408">Iron</keyword>
<keyword id="KW-0479">Metal-binding</keyword>
<keyword id="KW-0496">Mitochondrion</keyword>
<keyword id="KW-0597">Phosphoprotein</keyword>
<keyword id="KW-1185">Reference proteome</keyword>
<keyword id="KW-0679">Respiratory chain</keyword>
<keyword id="KW-0813">Transport</keyword>
<sequence length="105" mass="11737">MGDVEKGKKIFIMKCSQCHTVEKGGKHKTGPNLHGLFGRKTGQAPGYSYTAANKNKGITWGEDTLMEYLENPKKYIPGTKMIFVGIKKKEERADLIAYLKKATNE</sequence>